<comment type="function">
    <text evidence="1">Catalyzes the formation of S-adenosylmethionine (AdoMet) from methionine and ATP. The overall synthetic reaction is composed of two sequential steps, AdoMet formation and the subsequent tripolyphosphate hydrolysis which occurs prior to release of AdoMet from the enzyme.</text>
</comment>
<comment type="catalytic activity">
    <reaction evidence="1">
        <text>L-methionine + ATP + H2O = S-adenosyl-L-methionine + phosphate + diphosphate</text>
        <dbReference type="Rhea" id="RHEA:21080"/>
        <dbReference type="ChEBI" id="CHEBI:15377"/>
        <dbReference type="ChEBI" id="CHEBI:30616"/>
        <dbReference type="ChEBI" id="CHEBI:33019"/>
        <dbReference type="ChEBI" id="CHEBI:43474"/>
        <dbReference type="ChEBI" id="CHEBI:57844"/>
        <dbReference type="ChEBI" id="CHEBI:59789"/>
        <dbReference type="EC" id="2.5.1.6"/>
    </reaction>
</comment>
<comment type="cofactor">
    <cofactor evidence="1">
        <name>Mg(2+)</name>
        <dbReference type="ChEBI" id="CHEBI:18420"/>
    </cofactor>
    <text evidence="1">Binds 2 divalent ions per subunit.</text>
</comment>
<comment type="cofactor">
    <cofactor evidence="1">
        <name>K(+)</name>
        <dbReference type="ChEBI" id="CHEBI:29103"/>
    </cofactor>
    <text evidence="1">Binds 1 potassium ion per subunit.</text>
</comment>
<comment type="pathway">
    <text evidence="1">Amino-acid biosynthesis; S-adenosyl-L-methionine biosynthesis; S-adenosyl-L-methionine from L-methionine: step 1/1.</text>
</comment>
<comment type="subunit">
    <text evidence="1">Homotetramer; dimer of dimers.</text>
</comment>
<comment type="subcellular location">
    <subcellularLocation>
        <location evidence="1">Cytoplasm</location>
    </subcellularLocation>
</comment>
<comment type="similarity">
    <text evidence="1">Belongs to the AdoMet synthase family.</text>
</comment>
<keyword id="KW-0067">ATP-binding</keyword>
<keyword id="KW-0963">Cytoplasm</keyword>
<keyword id="KW-0460">Magnesium</keyword>
<keyword id="KW-0479">Metal-binding</keyword>
<keyword id="KW-0547">Nucleotide-binding</keyword>
<keyword id="KW-0554">One-carbon metabolism</keyword>
<keyword id="KW-0630">Potassium</keyword>
<keyword id="KW-1185">Reference proteome</keyword>
<keyword id="KW-0808">Transferase</keyword>
<sequence>MSSYLFTSESVSEGHPDKIADQISDAVLDAILAQDKRARVACETMVKTGVAIVAGEVTTSAWIDLEALTRKVILDIGYNSSDVGFDGETCGVLNLIGKQSPDINQGVDRKNPEQQGAGDQGLMFGYATNETDSYMPAAIHLSHRLVEQQAKIRKKKNSALSWLRPDAKSQVTLRYEDGVATAIDAVVLSTHHDPGVKQKDLIEAVREEILKPVLPAKWLHKGTKFHINPTGKFVIGGPVGDCGLTGRKIIVDTYGGWARHGGGAFSGKDPSKVDRSAAYAARYVAKNVVAAGLADRCEVQVSYAIGVAEPTSISVTTFGTGKIADELIEKLIRKHFDLRPFGIIQMLDLIHPMYQQTASYGHFGRKPKDFTYTDGTGAQHSATSFSWEKTDRAEALRAAAKLK</sequence>
<feature type="chain" id="PRO_0000174627" description="S-adenosylmethionine synthase">
    <location>
        <begin position="1"/>
        <end position="403"/>
    </location>
</feature>
<feature type="region of interest" description="Flexible loop" evidence="1">
    <location>
        <begin position="99"/>
        <end position="109"/>
    </location>
</feature>
<feature type="binding site" description="in other chain" evidence="1">
    <location>
        <position position="15"/>
    </location>
    <ligand>
        <name>ATP</name>
        <dbReference type="ChEBI" id="CHEBI:30616"/>
        <note>ligand shared between two neighboring subunits</note>
    </ligand>
</feature>
<feature type="binding site" evidence="1">
    <location>
        <position position="17"/>
    </location>
    <ligand>
        <name>Mg(2+)</name>
        <dbReference type="ChEBI" id="CHEBI:18420"/>
    </ligand>
</feature>
<feature type="binding site" evidence="1">
    <location>
        <position position="43"/>
    </location>
    <ligand>
        <name>K(+)</name>
        <dbReference type="ChEBI" id="CHEBI:29103"/>
    </ligand>
</feature>
<feature type="binding site" description="in other chain" evidence="1">
    <location>
        <position position="56"/>
    </location>
    <ligand>
        <name>L-methionine</name>
        <dbReference type="ChEBI" id="CHEBI:57844"/>
        <note>ligand shared between two neighboring subunits</note>
    </ligand>
</feature>
<feature type="binding site" description="in other chain" evidence="1">
    <location>
        <position position="99"/>
    </location>
    <ligand>
        <name>L-methionine</name>
        <dbReference type="ChEBI" id="CHEBI:57844"/>
        <note>ligand shared between two neighboring subunits</note>
    </ligand>
</feature>
<feature type="binding site" description="in other chain" evidence="1">
    <location>
        <begin position="166"/>
        <end position="168"/>
    </location>
    <ligand>
        <name>ATP</name>
        <dbReference type="ChEBI" id="CHEBI:30616"/>
        <note>ligand shared between two neighboring subunits</note>
    </ligand>
</feature>
<feature type="binding site" description="in other chain" evidence="1">
    <location>
        <begin position="232"/>
        <end position="233"/>
    </location>
    <ligand>
        <name>ATP</name>
        <dbReference type="ChEBI" id="CHEBI:30616"/>
        <note>ligand shared between two neighboring subunits</note>
    </ligand>
</feature>
<feature type="binding site" evidence="1">
    <location>
        <position position="241"/>
    </location>
    <ligand>
        <name>ATP</name>
        <dbReference type="ChEBI" id="CHEBI:30616"/>
        <note>ligand shared between two neighboring subunits</note>
    </ligand>
</feature>
<feature type="binding site" evidence="1">
    <location>
        <position position="241"/>
    </location>
    <ligand>
        <name>L-methionine</name>
        <dbReference type="ChEBI" id="CHEBI:57844"/>
        <note>ligand shared between two neighboring subunits</note>
    </ligand>
</feature>
<feature type="binding site" description="in other chain" evidence="1">
    <location>
        <begin position="247"/>
        <end position="248"/>
    </location>
    <ligand>
        <name>ATP</name>
        <dbReference type="ChEBI" id="CHEBI:30616"/>
        <note>ligand shared between two neighboring subunits</note>
    </ligand>
</feature>
<feature type="binding site" evidence="1">
    <location>
        <position position="264"/>
    </location>
    <ligand>
        <name>ATP</name>
        <dbReference type="ChEBI" id="CHEBI:30616"/>
        <note>ligand shared between two neighboring subunits</note>
    </ligand>
</feature>
<feature type="binding site" evidence="1">
    <location>
        <position position="268"/>
    </location>
    <ligand>
        <name>ATP</name>
        <dbReference type="ChEBI" id="CHEBI:30616"/>
        <note>ligand shared between two neighboring subunits</note>
    </ligand>
</feature>
<feature type="binding site" description="in other chain" evidence="1">
    <location>
        <position position="272"/>
    </location>
    <ligand>
        <name>L-methionine</name>
        <dbReference type="ChEBI" id="CHEBI:57844"/>
        <note>ligand shared between two neighboring subunits</note>
    </ligand>
</feature>
<accession>Q8PCH3</accession>
<evidence type="ECO:0000255" key="1">
    <source>
        <dbReference type="HAMAP-Rule" id="MF_00086"/>
    </source>
</evidence>
<dbReference type="EC" id="2.5.1.6" evidence="1"/>
<dbReference type="EMBL" id="AE008922">
    <property type="protein sequence ID" value="AAM40076.1"/>
    <property type="molecule type" value="Genomic_DNA"/>
</dbReference>
<dbReference type="RefSeq" id="NP_636152.1">
    <property type="nucleotide sequence ID" value="NC_003902.1"/>
</dbReference>
<dbReference type="RefSeq" id="WP_011035997.1">
    <property type="nucleotide sequence ID" value="NC_003902.1"/>
</dbReference>
<dbReference type="SMR" id="Q8PCH3"/>
<dbReference type="STRING" id="190485.XCC0761"/>
<dbReference type="EnsemblBacteria" id="AAM40076">
    <property type="protein sequence ID" value="AAM40076"/>
    <property type="gene ID" value="XCC0761"/>
</dbReference>
<dbReference type="KEGG" id="xcc:XCC0761"/>
<dbReference type="PATRIC" id="fig|190485.4.peg.830"/>
<dbReference type="eggNOG" id="COG0192">
    <property type="taxonomic scope" value="Bacteria"/>
</dbReference>
<dbReference type="HOGENOM" id="CLU_041802_1_1_6"/>
<dbReference type="OrthoDB" id="9801686at2"/>
<dbReference type="UniPathway" id="UPA00315">
    <property type="reaction ID" value="UER00080"/>
</dbReference>
<dbReference type="Proteomes" id="UP000001010">
    <property type="component" value="Chromosome"/>
</dbReference>
<dbReference type="GO" id="GO:0005829">
    <property type="term" value="C:cytosol"/>
    <property type="evidence" value="ECO:0000318"/>
    <property type="project" value="GO_Central"/>
</dbReference>
<dbReference type="GO" id="GO:0005524">
    <property type="term" value="F:ATP binding"/>
    <property type="evidence" value="ECO:0007669"/>
    <property type="project" value="UniProtKB-UniRule"/>
</dbReference>
<dbReference type="GO" id="GO:0000287">
    <property type="term" value="F:magnesium ion binding"/>
    <property type="evidence" value="ECO:0007669"/>
    <property type="project" value="UniProtKB-UniRule"/>
</dbReference>
<dbReference type="GO" id="GO:0004478">
    <property type="term" value="F:methionine adenosyltransferase activity"/>
    <property type="evidence" value="ECO:0000318"/>
    <property type="project" value="GO_Central"/>
</dbReference>
<dbReference type="GO" id="GO:0006730">
    <property type="term" value="P:one-carbon metabolic process"/>
    <property type="evidence" value="ECO:0007669"/>
    <property type="project" value="UniProtKB-KW"/>
</dbReference>
<dbReference type="GO" id="GO:0006556">
    <property type="term" value="P:S-adenosylmethionine biosynthetic process"/>
    <property type="evidence" value="ECO:0000318"/>
    <property type="project" value="GO_Central"/>
</dbReference>
<dbReference type="CDD" id="cd18079">
    <property type="entry name" value="S-AdoMet_synt"/>
    <property type="match status" value="1"/>
</dbReference>
<dbReference type="FunFam" id="3.30.300.10:FF:000003">
    <property type="entry name" value="S-adenosylmethionine synthase"/>
    <property type="match status" value="1"/>
</dbReference>
<dbReference type="FunFam" id="3.30.300.10:FF:000004">
    <property type="entry name" value="S-adenosylmethionine synthase"/>
    <property type="match status" value="1"/>
</dbReference>
<dbReference type="Gene3D" id="3.30.300.10">
    <property type="match status" value="3"/>
</dbReference>
<dbReference type="HAMAP" id="MF_00086">
    <property type="entry name" value="S_AdoMet_synth1"/>
    <property type="match status" value="1"/>
</dbReference>
<dbReference type="InterPro" id="IPR022631">
    <property type="entry name" value="ADOMET_SYNTHASE_CS"/>
</dbReference>
<dbReference type="InterPro" id="IPR022630">
    <property type="entry name" value="S-AdoMet_synt_C"/>
</dbReference>
<dbReference type="InterPro" id="IPR022629">
    <property type="entry name" value="S-AdoMet_synt_central"/>
</dbReference>
<dbReference type="InterPro" id="IPR022628">
    <property type="entry name" value="S-AdoMet_synt_N"/>
</dbReference>
<dbReference type="InterPro" id="IPR002133">
    <property type="entry name" value="S-AdoMet_synthetase"/>
</dbReference>
<dbReference type="InterPro" id="IPR022636">
    <property type="entry name" value="S-AdoMet_synthetase_sfam"/>
</dbReference>
<dbReference type="NCBIfam" id="TIGR01034">
    <property type="entry name" value="metK"/>
    <property type="match status" value="1"/>
</dbReference>
<dbReference type="PANTHER" id="PTHR11964">
    <property type="entry name" value="S-ADENOSYLMETHIONINE SYNTHETASE"/>
    <property type="match status" value="1"/>
</dbReference>
<dbReference type="Pfam" id="PF02773">
    <property type="entry name" value="S-AdoMet_synt_C"/>
    <property type="match status" value="1"/>
</dbReference>
<dbReference type="Pfam" id="PF02772">
    <property type="entry name" value="S-AdoMet_synt_M"/>
    <property type="match status" value="1"/>
</dbReference>
<dbReference type="Pfam" id="PF00438">
    <property type="entry name" value="S-AdoMet_synt_N"/>
    <property type="match status" value="1"/>
</dbReference>
<dbReference type="PIRSF" id="PIRSF000497">
    <property type="entry name" value="MAT"/>
    <property type="match status" value="1"/>
</dbReference>
<dbReference type="SUPFAM" id="SSF55973">
    <property type="entry name" value="S-adenosylmethionine synthetase"/>
    <property type="match status" value="3"/>
</dbReference>
<dbReference type="PROSITE" id="PS00376">
    <property type="entry name" value="ADOMET_SYNTHASE_1"/>
    <property type="match status" value="1"/>
</dbReference>
<dbReference type="PROSITE" id="PS00377">
    <property type="entry name" value="ADOMET_SYNTHASE_2"/>
    <property type="match status" value="1"/>
</dbReference>
<protein>
    <recommendedName>
        <fullName evidence="1">S-adenosylmethionine synthase</fullName>
        <shortName evidence="1">AdoMet synthase</shortName>
        <ecNumber evidence="1">2.5.1.6</ecNumber>
    </recommendedName>
    <alternativeName>
        <fullName evidence="1">MAT</fullName>
    </alternativeName>
    <alternativeName>
        <fullName evidence="1">Methionine adenosyltransferase</fullName>
    </alternativeName>
</protein>
<name>METK_XANCP</name>
<proteinExistence type="inferred from homology"/>
<gene>
    <name evidence="1" type="primary">metK</name>
    <name type="ordered locus">XCC0761</name>
</gene>
<reference key="1">
    <citation type="journal article" date="2002" name="Nature">
        <title>Comparison of the genomes of two Xanthomonas pathogens with differing host specificities.</title>
        <authorList>
            <person name="da Silva A.C.R."/>
            <person name="Ferro J.A."/>
            <person name="Reinach F.C."/>
            <person name="Farah C.S."/>
            <person name="Furlan L.R."/>
            <person name="Quaggio R.B."/>
            <person name="Monteiro-Vitorello C.B."/>
            <person name="Van Sluys M.A."/>
            <person name="Almeida N.F. Jr."/>
            <person name="Alves L.M.C."/>
            <person name="do Amaral A.M."/>
            <person name="Bertolini M.C."/>
            <person name="Camargo L.E.A."/>
            <person name="Camarotte G."/>
            <person name="Cannavan F."/>
            <person name="Cardozo J."/>
            <person name="Chambergo F."/>
            <person name="Ciapina L.P."/>
            <person name="Cicarelli R.M.B."/>
            <person name="Coutinho L.L."/>
            <person name="Cursino-Santos J.R."/>
            <person name="El-Dorry H."/>
            <person name="Faria J.B."/>
            <person name="Ferreira A.J.S."/>
            <person name="Ferreira R.C.C."/>
            <person name="Ferro M.I.T."/>
            <person name="Formighieri E.F."/>
            <person name="Franco M.C."/>
            <person name="Greggio C.C."/>
            <person name="Gruber A."/>
            <person name="Katsuyama A.M."/>
            <person name="Kishi L.T."/>
            <person name="Leite R.P."/>
            <person name="Lemos E.G.M."/>
            <person name="Lemos M.V.F."/>
            <person name="Locali E.C."/>
            <person name="Machado M.A."/>
            <person name="Madeira A.M.B.N."/>
            <person name="Martinez-Rossi N.M."/>
            <person name="Martins E.C."/>
            <person name="Meidanis J."/>
            <person name="Menck C.F.M."/>
            <person name="Miyaki C.Y."/>
            <person name="Moon D.H."/>
            <person name="Moreira L.M."/>
            <person name="Novo M.T.M."/>
            <person name="Okura V.K."/>
            <person name="Oliveira M.C."/>
            <person name="Oliveira V.R."/>
            <person name="Pereira H.A."/>
            <person name="Rossi A."/>
            <person name="Sena J.A.D."/>
            <person name="Silva C."/>
            <person name="de Souza R.F."/>
            <person name="Spinola L.A.F."/>
            <person name="Takita M.A."/>
            <person name="Tamura R.E."/>
            <person name="Teixeira E.C."/>
            <person name="Tezza R.I.D."/>
            <person name="Trindade dos Santos M."/>
            <person name="Truffi D."/>
            <person name="Tsai S.M."/>
            <person name="White F.F."/>
            <person name="Setubal J.C."/>
            <person name="Kitajima J.P."/>
        </authorList>
    </citation>
    <scope>NUCLEOTIDE SEQUENCE [LARGE SCALE GENOMIC DNA]</scope>
    <source>
        <strain>ATCC 33913 / DSM 3586 / NCPPB 528 / LMG 568 / P 25</strain>
    </source>
</reference>
<organism>
    <name type="scientific">Xanthomonas campestris pv. campestris (strain ATCC 33913 / DSM 3586 / NCPPB 528 / LMG 568 / P 25)</name>
    <dbReference type="NCBI Taxonomy" id="190485"/>
    <lineage>
        <taxon>Bacteria</taxon>
        <taxon>Pseudomonadati</taxon>
        <taxon>Pseudomonadota</taxon>
        <taxon>Gammaproteobacteria</taxon>
        <taxon>Lysobacterales</taxon>
        <taxon>Lysobacteraceae</taxon>
        <taxon>Xanthomonas</taxon>
    </lineage>
</organism>